<keyword id="KW-0963">Cytoplasm</keyword>
<keyword id="KW-0597">Phosphoprotein</keyword>
<keyword id="KW-1185">Reference proteome</keyword>
<comment type="subcellular location">
    <subcellularLocation>
        <location evidence="2">Cytoplasm</location>
    </subcellularLocation>
    <text>Localizes at the cell tip and barrier septum.</text>
</comment>
<organism>
    <name type="scientific">Schizosaccharomyces pombe (strain 972 / ATCC 24843)</name>
    <name type="common">Fission yeast</name>
    <dbReference type="NCBI Taxonomy" id="284812"/>
    <lineage>
        <taxon>Eukaryota</taxon>
        <taxon>Fungi</taxon>
        <taxon>Dikarya</taxon>
        <taxon>Ascomycota</taxon>
        <taxon>Taphrinomycotina</taxon>
        <taxon>Schizosaccharomycetes</taxon>
        <taxon>Schizosaccharomycetales</taxon>
        <taxon>Schizosaccharomycetaceae</taxon>
        <taxon>Schizosaccharomyces</taxon>
    </lineage>
</organism>
<name>YK1D_SCHPO</name>
<evidence type="ECO:0000256" key="1">
    <source>
        <dbReference type="SAM" id="MobiDB-lite"/>
    </source>
</evidence>
<evidence type="ECO:0000269" key="2">
    <source>
    </source>
</evidence>
<evidence type="ECO:0000269" key="3">
    <source>
    </source>
</evidence>
<dbReference type="EMBL" id="CU329670">
    <property type="protein sequence ID" value="CAC21486.1"/>
    <property type="molecule type" value="Genomic_DNA"/>
</dbReference>
<dbReference type="RefSeq" id="NP_593527.1">
    <property type="nucleotide sequence ID" value="NM_001018961.2"/>
</dbReference>
<dbReference type="BioGRID" id="279859">
    <property type="interactions" value="16"/>
</dbReference>
<dbReference type="iPTMnet" id="Q9HDX7"/>
<dbReference type="PaxDb" id="4896-SPAPB1A10.13.1"/>
<dbReference type="EnsemblFungi" id="SPAPB1A10.13.1">
    <property type="protein sequence ID" value="SPAPB1A10.13.1:pep"/>
    <property type="gene ID" value="SPAPB1A10.13"/>
</dbReference>
<dbReference type="KEGG" id="spo:2543439"/>
<dbReference type="PomBase" id="SPAPB1A10.13"/>
<dbReference type="VEuPathDB" id="FungiDB:SPAPB1A10.13"/>
<dbReference type="HOGENOM" id="CLU_515012_0_0_1"/>
<dbReference type="InParanoid" id="Q9HDX7"/>
<dbReference type="PRO" id="PR:Q9HDX7"/>
<dbReference type="Proteomes" id="UP000002485">
    <property type="component" value="Chromosome I"/>
</dbReference>
<dbReference type="GO" id="GO:0032153">
    <property type="term" value="C:cell division site"/>
    <property type="evidence" value="ECO:0007005"/>
    <property type="project" value="PomBase"/>
</dbReference>
<dbReference type="GO" id="GO:0051286">
    <property type="term" value="C:cell tip"/>
    <property type="evidence" value="ECO:0007005"/>
    <property type="project" value="PomBase"/>
</dbReference>
<dbReference type="GO" id="GO:0005737">
    <property type="term" value="C:cytoplasm"/>
    <property type="evidence" value="ECO:0000314"/>
    <property type="project" value="PomBase"/>
</dbReference>
<reference key="1">
    <citation type="journal article" date="2002" name="Nature">
        <title>The genome sequence of Schizosaccharomyces pombe.</title>
        <authorList>
            <person name="Wood V."/>
            <person name="Gwilliam R."/>
            <person name="Rajandream M.A."/>
            <person name="Lyne M.H."/>
            <person name="Lyne R."/>
            <person name="Stewart A."/>
            <person name="Sgouros J.G."/>
            <person name="Peat N."/>
            <person name="Hayles J."/>
            <person name="Baker S.G."/>
            <person name="Basham D."/>
            <person name="Bowman S."/>
            <person name="Brooks K."/>
            <person name="Brown D."/>
            <person name="Brown S."/>
            <person name="Chillingworth T."/>
            <person name="Churcher C.M."/>
            <person name="Collins M."/>
            <person name="Connor R."/>
            <person name="Cronin A."/>
            <person name="Davis P."/>
            <person name="Feltwell T."/>
            <person name="Fraser A."/>
            <person name="Gentles S."/>
            <person name="Goble A."/>
            <person name="Hamlin N."/>
            <person name="Harris D.E."/>
            <person name="Hidalgo J."/>
            <person name="Hodgson G."/>
            <person name="Holroyd S."/>
            <person name="Hornsby T."/>
            <person name="Howarth S."/>
            <person name="Huckle E.J."/>
            <person name="Hunt S."/>
            <person name="Jagels K."/>
            <person name="James K.D."/>
            <person name="Jones L."/>
            <person name="Jones M."/>
            <person name="Leather S."/>
            <person name="McDonald S."/>
            <person name="McLean J."/>
            <person name="Mooney P."/>
            <person name="Moule S."/>
            <person name="Mungall K.L."/>
            <person name="Murphy L.D."/>
            <person name="Niblett D."/>
            <person name="Odell C."/>
            <person name="Oliver K."/>
            <person name="O'Neil S."/>
            <person name="Pearson D."/>
            <person name="Quail M.A."/>
            <person name="Rabbinowitsch E."/>
            <person name="Rutherford K.M."/>
            <person name="Rutter S."/>
            <person name="Saunders D."/>
            <person name="Seeger K."/>
            <person name="Sharp S."/>
            <person name="Skelton J."/>
            <person name="Simmonds M.N."/>
            <person name="Squares R."/>
            <person name="Squares S."/>
            <person name="Stevens K."/>
            <person name="Taylor K."/>
            <person name="Taylor R.G."/>
            <person name="Tivey A."/>
            <person name="Walsh S.V."/>
            <person name="Warren T."/>
            <person name="Whitehead S."/>
            <person name="Woodward J.R."/>
            <person name="Volckaert G."/>
            <person name="Aert R."/>
            <person name="Robben J."/>
            <person name="Grymonprez B."/>
            <person name="Weltjens I."/>
            <person name="Vanstreels E."/>
            <person name="Rieger M."/>
            <person name="Schaefer M."/>
            <person name="Mueller-Auer S."/>
            <person name="Gabel C."/>
            <person name="Fuchs M."/>
            <person name="Duesterhoeft A."/>
            <person name="Fritzc C."/>
            <person name="Holzer E."/>
            <person name="Moestl D."/>
            <person name="Hilbert H."/>
            <person name="Borzym K."/>
            <person name="Langer I."/>
            <person name="Beck A."/>
            <person name="Lehrach H."/>
            <person name="Reinhardt R."/>
            <person name="Pohl T.M."/>
            <person name="Eger P."/>
            <person name="Zimmermann W."/>
            <person name="Wedler H."/>
            <person name="Wambutt R."/>
            <person name="Purnelle B."/>
            <person name="Goffeau A."/>
            <person name="Cadieu E."/>
            <person name="Dreano S."/>
            <person name="Gloux S."/>
            <person name="Lelaure V."/>
            <person name="Mottier S."/>
            <person name="Galibert F."/>
            <person name="Aves S.J."/>
            <person name="Xiang Z."/>
            <person name="Hunt C."/>
            <person name="Moore K."/>
            <person name="Hurst S.M."/>
            <person name="Lucas M."/>
            <person name="Rochet M."/>
            <person name="Gaillardin C."/>
            <person name="Tallada V.A."/>
            <person name="Garzon A."/>
            <person name="Thode G."/>
            <person name="Daga R.R."/>
            <person name="Cruzado L."/>
            <person name="Jimenez J."/>
            <person name="Sanchez M."/>
            <person name="del Rey F."/>
            <person name="Benito J."/>
            <person name="Dominguez A."/>
            <person name="Revuelta J.L."/>
            <person name="Moreno S."/>
            <person name="Armstrong J."/>
            <person name="Forsburg S.L."/>
            <person name="Cerutti L."/>
            <person name="Lowe T."/>
            <person name="McCombie W.R."/>
            <person name="Paulsen I."/>
            <person name="Potashkin J."/>
            <person name="Shpakovski G.V."/>
            <person name="Ussery D."/>
            <person name="Barrell B.G."/>
            <person name="Nurse P."/>
        </authorList>
    </citation>
    <scope>NUCLEOTIDE SEQUENCE [LARGE SCALE GENOMIC DNA]</scope>
    <source>
        <strain>972 / ATCC 24843</strain>
    </source>
</reference>
<reference key="2">
    <citation type="journal article" date="2006" name="Nat. Biotechnol.">
        <title>ORFeome cloning and global analysis of protein localization in the fission yeast Schizosaccharomyces pombe.</title>
        <authorList>
            <person name="Matsuyama A."/>
            <person name="Arai R."/>
            <person name="Yashiroda Y."/>
            <person name="Shirai A."/>
            <person name="Kamata A."/>
            <person name="Sekido S."/>
            <person name="Kobayashi Y."/>
            <person name="Hashimoto A."/>
            <person name="Hamamoto M."/>
            <person name="Hiraoka Y."/>
            <person name="Horinouchi S."/>
            <person name="Yoshida M."/>
        </authorList>
    </citation>
    <scope>SUBCELLULAR LOCATION [LARGE SCALE ANALYSIS]</scope>
</reference>
<reference key="3">
    <citation type="journal article" date="2008" name="J. Proteome Res.">
        <title>Phosphoproteome analysis of fission yeast.</title>
        <authorList>
            <person name="Wilson-Grady J.T."/>
            <person name="Villen J."/>
            <person name="Gygi S.P."/>
        </authorList>
    </citation>
    <scope>PHOSPHORYLATION [LARGE SCALE ANALYSIS] AT SER-128 AND SER-217</scope>
    <scope>IDENTIFICATION BY MASS SPECTROMETRY</scope>
</reference>
<sequence>MSSSKIKELREGLMSSSKWSMAPGMMMQQNQPRPATTTPPISRGNEDADEGLNTARSFSSFQDLKGMSGDAKEQESATLVHLTKGRAHPRSRRPPRQISIDSAKKEETKNTGSTKAADTKSSVEATISPLKDTKSPSNASVFPIKPTESKTSTTKDSETAKEEDDASSSTTKAVEATTSKASSAHTDTLATSASNSDRGASTPEMVVKAEKREGSTSPIPYSSLSIAERIKQAQNTPFLESKVLPQNNETSDEENVDVKPAAGTVKNVMQAFLQPATPAKDTASKEPSKSSQQPVRTKPRIAQSPFLAQDAKENGGNVEVSSPLSFSASKSPAAVDSSTKTPTEQVNVVSKQAPTTSSTSVISPDPLQTAAPSANVNEVIASLESKVVTRRTGSGNNYRVGLRNVSGSERTKSLSKESPVEPEKPALPDATSSSTPTTENKESWTNQGIKSSQQRSANASPATSPSNQASIHASFTKESSTHSSPSFTLESLFSGAPRVVELTRFSQPSPACSRALLARWKEEYRTSIH</sequence>
<feature type="chain" id="PRO_0000304080" description="Uncharacterized protein PB1A10.13">
    <location>
        <begin position="1"/>
        <end position="529"/>
    </location>
</feature>
<feature type="region of interest" description="Disordered" evidence="1">
    <location>
        <begin position="1"/>
        <end position="222"/>
    </location>
</feature>
<feature type="region of interest" description="Disordered" evidence="1">
    <location>
        <begin position="237"/>
        <end position="256"/>
    </location>
</feature>
<feature type="region of interest" description="Disordered" evidence="1">
    <location>
        <begin position="271"/>
        <end position="372"/>
    </location>
</feature>
<feature type="region of interest" description="Disordered" evidence="1">
    <location>
        <begin position="393"/>
        <end position="488"/>
    </location>
</feature>
<feature type="compositionally biased region" description="Basic and acidic residues" evidence="1">
    <location>
        <begin position="1"/>
        <end position="11"/>
    </location>
</feature>
<feature type="compositionally biased region" description="Polar residues" evidence="1">
    <location>
        <begin position="27"/>
        <end position="40"/>
    </location>
</feature>
<feature type="compositionally biased region" description="Basic residues" evidence="1">
    <location>
        <begin position="83"/>
        <end position="95"/>
    </location>
</feature>
<feature type="compositionally biased region" description="Polar residues" evidence="1">
    <location>
        <begin position="110"/>
        <end position="125"/>
    </location>
</feature>
<feature type="compositionally biased region" description="Polar residues" evidence="1">
    <location>
        <begin position="170"/>
        <end position="199"/>
    </location>
</feature>
<feature type="compositionally biased region" description="Polar residues" evidence="1">
    <location>
        <begin position="237"/>
        <end position="249"/>
    </location>
</feature>
<feature type="compositionally biased region" description="Low complexity" evidence="1">
    <location>
        <begin position="321"/>
        <end position="334"/>
    </location>
</feature>
<feature type="compositionally biased region" description="Polar residues" evidence="1">
    <location>
        <begin position="336"/>
        <end position="362"/>
    </location>
</feature>
<feature type="compositionally biased region" description="Basic and acidic residues" evidence="1">
    <location>
        <begin position="409"/>
        <end position="426"/>
    </location>
</feature>
<feature type="compositionally biased region" description="Polar residues" evidence="1">
    <location>
        <begin position="430"/>
        <end position="455"/>
    </location>
</feature>
<feature type="compositionally biased region" description="Low complexity" evidence="1">
    <location>
        <begin position="456"/>
        <end position="470"/>
    </location>
</feature>
<feature type="compositionally biased region" description="Polar residues" evidence="1">
    <location>
        <begin position="471"/>
        <end position="488"/>
    </location>
</feature>
<feature type="modified residue" description="Phosphoserine" evidence="3">
    <location>
        <position position="128"/>
    </location>
</feature>
<feature type="modified residue" description="Phosphoserine" evidence="3">
    <location>
        <position position="217"/>
    </location>
</feature>
<gene>
    <name type="ORF">SPAPB1A10.13</name>
</gene>
<protein>
    <recommendedName>
        <fullName>Uncharacterized protein PB1A10.13</fullName>
    </recommendedName>
</protein>
<proteinExistence type="evidence at protein level"/>
<accession>Q9HDX7</accession>